<reference key="1">
    <citation type="journal article" date="2009" name="PLoS Genet.">
        <title>Organised genome dynamics in the Escherichia coli species results in highly diverse adaptive paths.</title>
        <authorList>
            <person name="Touchon M."/>
            <person name="Hoede C."/>
            <person name="Tenaillon O."/>
            <person name="Barbe V."/>
            <person name="Baeriswyl S."/>
            <person name="Bidet P."/>
            <person name="Bingen E."/>
            <person name="Bonacorsi S."/>
            <person name="Bouchier C."/>
            <person name="Bouvet O."/>
            <person name="Calteau A."/>
            <person name="Chiapello H."/>
            <person name="Clermont O."/>
            <person name="Cruveiller S."/>
            <person name="Danchin A."/>
            <person name="Diard M."/>
            <person name="Dossat C."/>
            <person name="Karoui M.E."/>
            <person name="Frapy E."/>
            <person name="Garry L."/>
            <person name="Ghigo J.M."/>
            <person name="Gilles A.M."/>
            <person name="Johnson J."/>
            <person name="Le Bouguenec C."/>
            <person name="Lescat M."/>
            <person name="Mangenot S."/>
            <person name="Martinez-Jehanne V."/>
            <person name="Matic I."/>
            <person name="Nassif X."/>
            <person name="Oztas S."/>
            <person name="Petit M.A."/>
            <person name="Pichon C."/>
            <person name="Rouy Z."/>
            <person name="Ruf C.S."/>
            <person name="Schneider D."/>
            <person name="Tourret J."/>
            <person name="Vacherie B."/>
            <person name="Vallenet D."/>
            <person name="Medigue C."/>
            <person name="Rocha E.P.C."/>
            <person name="Denamur E."/>
        </authorList>
    </citation>
    <scope>NUCLEOTIDE SEQUENCE [LARGE SCALE GENOMIC DNA]</scope>
    <source>
        <strain>ED1a</strain>
    </source>
</reference>
<accession>B7N2H0</accession>
<sequence length="139" mass="15068">MAMTYHLDVVSAEQQMFSGLVEKIQVTGSEGELGIYPGHAPLLTAIKPGMIRIVKQHGHEEFIYLSGGILEVQPGNVTVLADTAIRGQDLDEARAMEAKRKAEEHISSSHGDVDYAQASAELAKAIAQLRVIELTKKAM</sequence>
<comment type="function">
    <text evidence="1">Produces ATP from ADP in the presence of a proton gradient across the membrane.</text>
</comment>
<comment type="subunit">
    <text evidence="1">F-type ATPases have 2 components, CF(1) - the catalytic core - and CF(0) - the membrane proton channel. CF(1) has five subunits: alpha(3), beta(3), gamma(1), delta(1), epsilon(1). CF(0) has three main subunits: a, b and c.</text>
</comment>
<comment type="subcellular location">
    <subcellularLocation>
        <location evidence="1">Cell inner membrane</location>
        <topology evidence="1">Peripheral membrane protein</topology>
    </subcellularLocation>
</comment>
<comment type="similarity">
    <text evidence="1">Belongs to the ATPase epsilon chain family.</text>
</comment>
<dbReference type="EMBL" id="CU928162">
    <property type="protein sequence ID" value="CAR10541.2"/>
    <property type="molecule type" value="Genomic_DNA"/>
</dbReference>
<dbReference type="RefSeq" id="WP_001251965.1">
    <property type="nucleotide sequence ID" value="NC_011745.1"/>
</dbReference>
<dbReference type="SMR" id="B7N2H0"/>
<dbReference type="KEGG" id="ecq:ECED1_4421"/>
<dbReference type="HOGENOM" id="CLU_084338_2_0_6"/>
<dbReference type="Proteomes" id="UP000000748">
    <property type="component" value="Chromosome"/>
</dbReference>
<dbReference type="GO" id="GO:0005886">
    <property type="term" value="C:plasma membrane"/>
    <property type="evidence" value="ECO:0007669"/>
    <property type="project" value="UniProtKB-SubCell"/>
</dbReference>
<dbReference type="GO" id="GO:0045259">
    <property type="term" value="C:proton-transporting ATP synthase complex"/>
    <property type="evidence" value="ECO:0007669"/>
    <property type="project" value="UniProtKB-KW"/>
</dbReference>
<dbReference type="GO" id="GO:0005524">
    <property type="term" value="F:ATP binding"/>
    <property type="evidence" value="ECO:0007669"/>
    <property type="project" value="UniProtKB-UniRule"/>
</dbReference>
<dbReference type="GO" id="GO:0046933">
    <property type="term" value="F:proton-transporting ATP synthase activity, rotational mechanism"/>
    <property type="evidence" value="ECO:0007669"/>
    <property type="project" value="UniProtKB-UniRule"/>
</dbReference>
<dbReference type="CDD" id="cd12152">
    <property type="entry name" value="F1-ATPase_delta"/>
    <property type="match status" value="1"/>
</dbReference>
<dbReference type="FunFam" id="1.20.5.440:FF:000001">
    <property type="entry name" value="ATP synthase epsilon chain"/>
    <property type="match status" value="1"/>
</dbReference>
<dbReference type="FunFam" id="2.60.15.10:FF:000001">
    <property type="entry name" value="ATP synthase epsilon chain"/>
    <property type="match status" value="1"/>
</dbReference>
<dbReference type="Gene3D" id="1.20.5.440">
    <property type="entry name" value="ATP synthase delta/epsilon subunit, C-terminal domain"/>
    <property type="match status" value="1"/>
</dbReference>
<dbReference type="Gene3D" id="2.60.15.10">
    <property type="entry name" value="F0F1 ATP synthase delta/epsilon subunit, N-terminal"/>
    <property type="match status" value="1"/>
</dbReference>
<dbReference type="HAMAP" id="MF_00530">
    <property type="entry name" value="ATP_synth_epsil_bac"/>
    <property type="match status" value="1"/>
</dbReference>
<dbReference type="InterPro" id="IPR036794">
    <property type="entry name" value="ATP_F1_dsu/esu_C_sf"/>
</dbReference>
<dbReference type="InterPro" id="IPR001469">
    <property type="entry name" value="ATP_synth_F1_dsu/esu"/>
</dbReference>
<dbReference type="InterPro" id="IPR020546">
    <property type="entry name" value="ATP_synth_F1_dsu/esu_N"/>
</dbReference>
<dbReference type="InterPro" id="IPR020547">
    <property type="entry name" value="ATP_synth_F1_esu_C"/>
</dbReference>
<dbReference type="InterPro" id="IPR036771">
    <property type="entry name" value="ATPsynth_dsu/esu_N"/>
</dbReference>
<dbReference type="NCBIfam" id="TIGR01216">
    <property type="entry name" value="ATP_synt_epsi"/>
    <property type="match status" value="1"/>
</dbReference>
<dbReference type="NCBIfam" id="NF001847">
    <property type="entry name" value="PRK00571.1-4"/>
    <property type="match status" value="1"/>
</dbReference>
<dbReference type="PANTHER" id="PTHR13822">
    <property type="entry name" value="ATP SYNTHASE DELTA/EPSILON CHAIN"/>
    <property type="match status" value="1"/>
</dbReference>
<dbReference type="PANTHER" id="PTHR13822:SF10">
    <property type="entry name" value="ATP SYNTHASE EPSILON CHAIN, CHLOROPLASTIC"/>
    <property type="match status" value="1"/>
</dbReference>
<dbReference type="Pfam" id="PF00401">
    <property type="entry name" value="ATP-synt_DE"/>
    <property type="match status" value="1"/>
</dbReference>
<dbReference type="Pfam" id="PF02823">
    <property type="entry name" value="ATP-synt_DE_N"/>
    <property type="match status" value="1"/>
</dbReference>
<dbReference type="SUPFAM" id="SSF46604">
    <property type="entry name" value="Epsilon subunit of F1F0-ATP synthase C-terminal domain"/>
    <property type="match status" value="1"/>
</dbReference>
<dbReference type="SUPFAM" id="SSF51344">
    <property type="entry name" value="Epsilon subunit of F1F0-ATP synthase N-terminal domain"/>
    <property type="match status" value="1"/>
</dbReference>
<proteinExistence type="inferred from homology"/>
<gene>
    <name evidence="1" type="primary">atpC</name>
    <name type="ordered locus">ECED1_4421</name>
</gene>
<keyword id="KW-0066">ATP synthesis</keyword>
<keyword id="KW-0997">Cell inner membrane</keyword>
<keyword id="KW-1003">Cell membrane</keyword>
<keyword id="KW-0139">CF(1)</keyword>
<keyword id="KW-0375">Hydrogen ion transport</keyword>
<keyword id="KW-0406">Ion transport</keyword>
<keyword id="KW-0472">Membrane</keyword>
<keyword id="KW-0813">Transport</keyword>
<evidence type="ECO:0000255" key="1">
    <source>
        <dbReference type="HAMAP-Rule" id="MF_00530"/>
    </source>
</evidence>
<organism>
    <name type="scientific">Escherichia coli O81 (strain ED1a)</name>
    <dbReference type="NCBI Taxonomy" id="585397"/>
    <lineage>
        <taxon>Bacteria</taxon>
        <taxon>Pseudomonadati</taxon>
        <taxon>Pseudomonadota</taxon>
        <taxon>Gammaproteobacteria</taxon>
        <taxon>Enterobacterales</taxon>
        <taxon>Enterobacteriaceae</taxon>
        <taxon>Escherichia</taxon>
    </lineage>
</organism>
<name>ATPE_ECO81</name>
<feature type="chain" id="PRO_1000146329" description="ATP synthase epsilon chain">
    <location>
        <begin position="1"/>
        <end position="139"/>
    </location>
</feature>
<protein>
    <recommendedName>
        <fullName evidence="1">ATP synthase epsilon chain</fullName>
    </recommendedName>
    <alternativeName>
        <fullName evidence="1">ATP synthase F1 sector epsilon subunit</fullName>
    </alternativeName>
    <alternativeName>
        <fullName evidence="1">F-ATPase epsilon subunit</fullName>
    </alternativeName>
</protein>